<protein>
    <recommendedName>
        <fullName evidence="1">Chromosomal replication initiator protein DnaA</fullName>
    </recommendedName>
</protein>
<organism>
    <name type="scientific">Shewanella baltica (strain OS195)</name>
    <dbReference type="NCBI Taxonomy" id="399599"/>
    <lineage>
        <taxon>Bacteria</taxon>
        <taxon>Pseudomonadati</taxon>
        <taxon>Pseudomonadota</taxon>
        <taxon>Gammaproteobacteria</taxon>
        <taxon>Alteromonadales</taxon>
        <taxon>Shewanellaceae</taxon>
        <taxon>Shewanella</taxon>
    </lineage>
</organism>
<dbReference type="EMBL" id="CP000891">
    <property type="protein sequence ID" value="ABX47183.1"/>
    <property type="molecule type" value="Genomic_DNA"/>
</dbReference>
<dbReference type="RefSeq" id="WP_006083826.1">
    <property type="nucleotide sequence ID" value="NC_009997.1"/>
</dbReference>
<dbReference type="SMR" id="A9KU72"/>
<dbReference type="GeneID" id="11774105"/>
<dbReference type="KEGG" id="sbn:Sbal195_0001"/>
<dbReference type="HOGENOM" id="CLU_026910_0_1_6"/>
<dbReference type="Proteomes" id="UP000000770">
    <property type="component" value="Chromosome"/>
</dbReference>
<dbReference type="GO" id="GO:0005737">
    <property type="term" value="C:cytoplasm"/>
    <property type="evidence" value="ECO:0007669"/>
    <property type="project" value="UniProtKB-SubCell"/>
</dbReference>
<dbReference type="GO" id="GO:0005886">
    <property type="term" value="C:plasma membrane"/>
    <property type="evidence" value="ECO:0007669"/>
    <property type="project" value="TreeGrafter"/>
</dbReference>
<dbReference type="GO" id="GO:0005524">
    <property type="term" value="F:ATP binding"/>
    <property type="evidence" value="ECO:0007669"/>
    <property type="project" value="UniProtKB-UniRule"/>
</dbReference>
<dbReference type="GO" id="GO:0016887">
    <property type="term" value="F:ATP hydrolysis activity"/>
    <property type="evidence" value="ECO:0007669"/>
    <property type="project" value="InterPro"/>
</dbReference>
<dbReference type="GO" id="GO:0003688">
    <property type="term" value="F:DNA replication origin binding"/>
    <property type="evidence" value="ECO:0007669"/>
    <property type="project" value="UniProtKB-UniRule"/>
</dbReference>
<dbReference type="GO" id="GO:0008289">
    <property type="term" value="F:lipid binding"/>
    <property type="evidence" value="ECO:0007669"/>
    <property type="project" value="UniProtKB-KW"/>
</dbReference>
<dbReference type="GO" id="GO:0006270">
    <property type="term" value="P:DNA replication initiation"/>
    <property type="evidence" value="ECO:0007669"/>
    <property type="project" value="UniProtKB-UniRule"/>
</dbReference>
<dbReference type="GO" id="GO:0006275">
    <property type="term" value="P:regulation of DNA replication"/>
    <property type="evidence" value="ECO:0007669"/>
    <property type="project" value="UniProtKB-UniRule"/>
</dbReference>
<dbReference type="CDD" id="cd00009">
    <property type="entry name" value="AAA"/>
    <property type="match status" value="1"/>
</dbReference>
<dbReference type="CDD" id="cd06571">
    <property type="entry name" value="Bac_DnaA_C"/>
    <property type="match status" value="1"/>
</dbReference>
<dbReference type="FunFam" id="1.10.1750.10:FF:000001">
    <property type="entry name" value="Chromosomal replication initiator protein DnaA"/>
    <property type="match status" value="1"/>
</dbReference>
<dbReference type="FunFam" id="1.10.8.60:FF:000003">
    <property type="entry name" value="Chromosomal replication initiator protein DnaA"/>
    <property type="match status" value="1"/>
</dbReference>
<dbReference type="FunFam" id="3.30.300.180:FF:000001">
    <property type="entry name" value="Chromosomal replication initiator protein DnaA"/>
    <property type="match status" value="1"/>
</dbReference>
<dbReference type="FunFam" id="3.40.50.300:FF:000103">
    <property type="entry name" value="Chromosomal replication initiator protein DnaA"/>
    <property type="match status" value="1"/>
</dbReference>
<dbReference type="Gene3D" id="1.10.1750.10">
    <property type="match status" value="1"/>
</dbReference>
<dbReference type="Gene3D" id="1.10.8.60">
    <property type="match status" value="1"/>
</dbReference>
<dbReference type="Gene3D" id="3.30.300.180">
    <property type="match status" value="1"/>
</dbReference>
<dbReference type="Gene3D" id="3.40.50.300">
    <property type="entry name" value="P-loop containing nucleotide triphosphate hydrolases"/>
    <property type="match status" value="1"/>
</dbReference>
<dbReference type="HAMAP" id="MF_00377">
    <property type="entry name" value="DnaA_bact"/>
    <property type="match status" value="1"/>
</dbReference>
<dbReference type="InterPro" id="IPR003593">
    <property type="entry name" value="AAA+_ATPase"/>
</dbReference>
<dbReference type="InterPro" id="IPR001957">
    <property type="entry name" value="Chromosome_initiator_DnaA"/>
</dbReference>
<dbReference type="InterPro" id="IPR020591">
    <property type="entry name" value="Chromosome_initiator_DnaA-like"/>
</dbReference>
<dbReference type="InterPro" id="IPR018312">
    <property type="entry name" value="Chromosome_initiator_DnaA_CS"/>
</dbReference>
<dbReference type="InterPro" id="IPR013159">
    <property type="entry name" value="DnaA_C"/>
</dbReference>
<dbReference type="InterPro" id="IPR013317">
    <property type="entry name" value="DnaA_dom"/>
</dbReference>
<dbReference type="InterPro" id="IPR024633">
    <property type="entry name" value="DnaA_N_dom"/>
</dbReference>
<dbReference type="InterPro" id="IPR038454">
    <property type="entry name" value="DnaA_N_sf"/>
</dbReference>
<dbReference type="InterPro" id="IPR055199">
    <property type="entry name" value="Hda_lid"/>
</dbReference>
<dbReference type="InterPro" id="IPR027417">
    <property type="entry name" value="P-loop_NTPase"/>
</dbReference>
<dbReference type="InterPro" id="IPR010921">
    <property type="entry name" value="Trp_repressor/repl_initiator"/>
</dbReference>
<dbReference type="NCBIfam" id="TIGR00362">
    <property type="entry name" value="DnaA"/>
    <property type="match status" value="1"/>
</dbReference>
<dbReference type="PANTHER" id="PTHR30050">
    <property type="entry name" value="CHROMOSOMAL REPLICATION INITIATOR PROTEIN DNAA"/>
    <property type="match status" value="1"/>
</dbReference>
<dbReference type="PANTHER" id="PTHR30050:SF2">
    <property type="entry name" value="CHROMOSOMAL REPLICATION INITIATOR PROTEIN DNAA"/>
    <property type="match status" value="1"/>
</dbReference>
<dbReference type="Pfam" id="PF00308">
    <property type="entry name" value="Bac_DnaA"/>
    <property type="match status" value="1"/>
</dbReference>
<dbReference type="Pfam" id="PF08299">
    <property type="entry name" value="Bac_DnaA_C"/>
    <property type="match status" value="1"/>
</dbReference>
<dbReference type="Pfam" id="PF11638">
    <property type="entry name" value="DnaA_N"/>
    <property type="match status" value="1"/>
</dbReference>
<dbReference type="Pfam" id="PF22688">
    <property type="entry name" value="Hda_lid"/>
    <property type="match status" value="1"/>
</dbReference>
<dbReference type="PRINTS" id="PR00051">
    <property type="entry name" value="DNAA"/>
</dbReference>
<dbReference type="SMART" id="SM00382">
    <property type="entry name" value="AAA"/>
    <property type="match status" value="1"/>
</dbReference>
<dbReference type="SMART" id="SM00760">
    <property type="entry name" value="Bac_DnaA_C"/>
    <property type="match status" value="1"/>
</dbReference>
<dbReference type="SUPFAM" id="SSF52540">
    <property type="entry name" value="P-loop containing nucleoside triphosphate hydrolases"/>
    <property type="match status" value="1"/>
</dbReference>
<dbReference type="SUPFAM" id="SSF48295">
    <property type="entry name" value="TrpR-like"/>
    <property type="match status" value="1"/>
</dbReference>
<dbReference type="PROSITE" id="PS01008">
    <property type="entry name" value="DNAA"/>
    <property type="match status" value="1"/>
</dbReference>
<name>DNAA_SHEB9</name>
<gene>
    <name evidence="1" type="primary">dnaA</name>
    <name type="ordered locus">Sbal195_0001</name>
</gene>
<sequence>MAVSLWQQCIGRLQDELSAQQFSMWIRPLQAEMDGDTLVLYAPNRFVLDWVRDKYINIINQFFTEQMGSDAPKLRFDIGSRPSAKKPSVPAPIAPTRVANTQTKATVGTTFNVQAEPMANANHRSNINPSYQFDNFVEGKSNQLGKAAALQVAENPGGAYNPLFLYGGTGLGKTHLLHAVGNGIIKNNPNAKVVYMHSERFVQDMVKALQNNAIEEFKRYYRSVDALFIDDIQFFANKDRSQEEFFHTFNALLEGNHQIILTSDRYPKEIDGVEDRLKSRFGWGLTVAIEPPELETRVAILMRKAQESGINLPDEVAFFIAKRLRSNVRELEGALNRVIANANFTGRPITIDFVREALRDLLALQEKLVTIDNIQKTVAEYYKIKMADMLSKRRSRSVARPRQVAMALSKELTNQSLPEIGDAFGGRDHTTVLHACRKIAQLREESHDIKEDYANLIRTLSS</sequence>
<reference key="1">
    <citation type="submission" date="2007-11" db="EMBL/GenBank/DDBJ databases">
        <title>Complete sequence of chromosome of Shewanella baltica OS195.</title>
        <authorList>
            <consortium name="US DOE Joint Genome Institute"/>
            <person name="Copeland A."/>
            <person name="Lucas S."/>
            <person name="Lapidus A."/>
            <person name="Barry K."/>
            <person name="Glavina del Rio T."/>
            <person name="Dalin E."/>
            <person name="Tice H."/>
            <person name="Pitluck S."/>
            <person name="Chain P."/>
            <person name="Malfatti S."/>
            <person name="Shin M."/>
            <person name="Vergez L."/>
            <person name="Schmutz J."/>
            <person name="Larimer F."/>
            <person name="Land M."/>
            <person name="Hauser L."/>
            <person name="Kyrpides N."/>
            <person name="Kim E."/>
            <person name="Brettar I."/>
            <person name="Rodrigues J."/>
            <person name="Konstantinidis K."/>
            <person name="Klappenbach J."/>
            <person name="Hofle M."/>
            <person name="Tiedje J."/>
            <person name="Richardson P."/>
        </authorList>
    </citation>
    <scope>NUCLEOTIDE SEQUENCE [LARGE SCALE GENOMIC DNA]</scope>
    <source>
        <strain>OS195</strain>
    </source>
</reference>
<accession>A9KU72</accession>
<keyword id="KW-0067">ATP-binding</keyword>
<keyword id="KW-0963">Cytoplasm</keyword>
<keyword id="KW-0235">DNA replication</keyword>
<keyword id="KW-0238">DNA-binding</keyword>
<keyword id="KW-0446">Lipid-binding</keyword>
<keyword id="KW-0547">Nucleotide-binding</keyword>
<proteinExistence type="inferred from homology"/>
<evidence type="ECO:0000255" key="1">
    <source>
        <dbReference type="HAMAP-Rule" id="MF_00377"/>
    </source>
</evidence>
<feature type="chain" id="PRO_1000079961" description="Chromosomal replication initiator protein DnaA">
    <location>
        <begin position="1"/>
        <end position="462"/>
    </location>
</feature>
<feature type="region of interest" description="Domain I, interacts with DnaA modulators" evidence="1">
    <location>
        <begin position="1"/>
        <end position="84"/>
    </location>
</feature>
<feature type="region of interest" description="Domain II" evidence="1">
    <location>
        <begin position="84"/>
        <end position="125"/>
    </location>
</feature>
<feature type="region of interest" description="Domain III, AAA+ region" evidence="1">
    <location>
        <begin position="126"/>
        <end position="342"/>
    </location>
</feature>
<feature type="region of interest" description="Domain IV, binds dsDNA" evidence="1">
    <location>
        <begin position="343"/>
        <end position="462"/>
    </location>
</feature>
<feature type="binding site" evidence="1">
    <location>
        <position position="170"/>
    </location>
    <ligand>
        <name>ATP</name>
        <dbReference type="ChEBI" id="CHEBI:30616"/>
    </ligand>
</feature>
<feature type="binding site" evidence="1">
    <location>
        <position position="172"/>
    </location>
    <ligand>
        <name>ATP</name>
        <dbReference type="ChEBI" id="CHEBI:30616"/>
    </ligand>
</feature>
<feature type="binding site" evidence="1">
    <location>
        <position position="173"/>
    </location>
    <ligand>
        <name>ATP</name>
        <dbReference type="ChEBI" id="CHEBI:30616"/>
    </ligand>
</feature>
<feature type="binding site" evidence="1">
    <location>
        <position position="174"/>
    </location>
    <ligand>
        <name>ATP</name>
        <dbReference type="ChEBI" id="CHEBI:30616"/>
    </ligand>
</feature>
<comment type="function">
    <text evidence="1">Plays an essential role in the initiation and regulation of chromosomal replication. ATP-DnaA binds to the origin of replication (oriC) to initiate formation of the DNA replication initiation complex once per cell cycle. Binds the DnaA box (a 9 base pair repeat at the origin) and separates the double-stranded (ds)DNA. Forms a right-handed helical filament on oriC DNA; dsDNA binds to the exterior of the filament while single-stranded (ss)DNA is stabiized in the filament's interior. The ATP-DnaA-oriC complex binds and stabilizes one strand of the AT-rich DNA unwinding element (DUE), permitting loading of DNA polymerase. After initiation quickly degrades to an ADP-DnaA complex that is not apt for DNA replication. Binds acidic phospholipids.</text>
</comment>
<comment type="subunit">
    <text evidence="1">Oligomerizes as a right-handed, spiral filament on DNA at oriC.</text>
</comment>
<comment type="subcellular location">
    <subcellularLocation>
        <location evidence="1">Cytoplasm</location>
    </subcellularLocation>
</comment>
<comment type="domain">
    <text evidence="1">Domain I is involved in oligomerization and binding regulators, domain II is flexibile and of varying length in different bacteria, domain III forms the AAA+ region, while domain IV binds dsDNA.</text>
</comment>
<comment type="similarity">
    <text evidence="1">Belongs to the DnaA family.</text>
</comment>